<proteinExistence type="inferred from homology"/>
<reference key="1">
    <citation type="journal article" date="2010" name="J. Bacteriol.">
        <title>Complete genome sequence of Enterobacter cloacae subsp. cloacae type strain ATCC 13047.</title>
        <authorList>
            <person name="Ren Y."/>
            <person name="Ren Y."/>
            <person name="Zhou Z."/>
            <person name="Guo X."/>
            <person name="Li Y."/>
            <person name="Feng L."/>
            <person name="Wang L."/>
        </authorList>
    </citation>
    <scope>NUCLEOTIDE SEQUENCE [LARGE SCALE GENOMIC DNA]</scope>
    <source>
        <strain>ATCC 13047 / DSM 30054 / NBRC 13535 / NCTC 10005 / WDCM 00083 / NCDC 279-56</strain>
    </source>
</reference>
<reference key="2">
    <citation type="journal article" date="2016" name="PLoS Pathog.">
        <title>CdiA effectors from uropathogenic Escherichia coli use heterotrimeric osmoporins as receptors to recognize target bacteria.</title>
        <authorList>
            <person name="Beck C.M."/>
            <person name="Willett J.L."/>
            <person name="Cunningham D.A."/>
            <person name="Kim J.J."/>
            <person name="Low D.A."/>
            <person name="Hayes C.S."/>
        </authorList>
    </citation>
    <scope>FUNCTION (MICROBIAL INFECTION)</scope>
    <source>
        <strain>ATCC 13047 / DSM 30054 / NBRC 13535 / NCTC 10005 / WDCM 00083 / NCDC 279-56</strain>
    </source>
</reference>
<dbReference type="EMBL" id="CP001918">
    <property type="protein sequence ID" value="ADF63053.1"/>
    <property type="molecule type" value="Genomic_DNA"/>
</dbReference>
<dbReference type="RefSeq" id="WP_013098006.1">
    <property type="nucleotide sequence ID" value="NC_014121.1"/>
</dbReference>
<dbReference type="RefSeq" id="YP_003614002.1">
    <property type="nucleotide sequence ID" value="NC_014121.1"/>
</dbReference>
<dbReference type="SMR" id="A0A0H3CMG2"/>
<dbReference type="STRING" id="716541.ECL_03519"/>
<dbReference type="EnsemblBacteria" id="ADF63053">
    <property type="protein sequence ID" value="ADF63053"/>
    <property type="gene ID" value="ECL_03519"/>
</dbReference>
<dbReference type="KEGG" id="enc:ECL_03519"/>
<dbReference type="PATRIC" id="fig|716541.4.peg.3681"/>
<dbReference type="eggNOG" id="COG3203">
    <property type="taxonomic scope" value="Bacteria"/>
</dbReference>
<dbReference type="HOGENOM" id="CLU_058202_0_0_6"/>
<dbReference type="OrthoDB" id="7055111at2"/>
<dbReference type="Proteomes" id="UP000002363">
    <property type="component" value="Chromosome"/>
</dbReference>
<dbReference type="GO" id="GO:0009279">
    <property type="term" value="C:cell outer membrane"/>
    <property type="evidence" value="ECO:0007669"/>
    <property type="project" value="UniProtKB-SubCell"/>
</dbReference>
<dbReference type="GO" id="GO:0046930">
    <property type="term" value="C:pore complex"/>
    <property type="evidence" value="ECO:0007669"/>
    <property type="project" value="UniProtKB-KW"/>
</dbReference>
<dbReference type="GO" id="GO:0015288">
    <property type="term" value="F:porin activity"/>
    <property type="evidence" value="ECO:0007669"/>
    <property type="project" value="UniProtKB-KW"/>
</dbReference>
<dbReference type="GO" id="GO:0034220">
    <property type="term" value="P:monoatomic ion transmembrane transport"/>
    <property type="evidence" value="ECO:0007669"/>
    <property type="project" value="InterPro"/>
</dbReference>
<dbReference type="FunFam" id="2.40.160.10:FF:000002">
    <property type="entry name" value="Outer membrane porin F"/>
    <property type="match status" value="1"/>
</dbReference>
<dbReference type="Gene3D" id="2.40.160.10">
    <property type="entry name" value="Porin"/>
    <property type="match status" value="1"/>
</dbReference>
<dbReference type="InterPro" id="IPR050298">
    <property type="entry name" value="Gram-neg_bact_OMP"/>
</dbReference>
<dbReference type="InterPro" id="IPR023614">
    <property type="entry name" value="Porin_dom_sf"/>
</dbReference>
<dbReference type="InterPro" id="IPR001897">
    <property type="entry name" value="Porin_gammaproteobac"/>
</dbReference>
<dbReference type="InterPro" id="IPR001702">
    <property type="entry name" value="Porin_Gram-ve"/>
</dbReference>
<dbReference type="InterPro" id="IPR013793">
    <property type="entry name" value="Porin_Gram-ve_CS"/>
</dbReference>
<dbReference type="NCBIfam" id="NF007841">
    <property type="entry name" value="PRK10554.1"/>
    <property type="match status" value="1"/>
</dbReference>
<dbReference type="PANTHER" id="PTHR34501:SF1">
    <property type="entry name" value="OUTER MEMBRANE PORIN C"/>
    <property type="match status" value="1"/>
</dbReference>
<dbReference type="PANTHER" id="PTHR34501">
    <property type="entry name" value="PROTEIN YDDL-RELATED"/>
    <property type="match status" value="1"/>
</dbReference>
<dbReference type="Pfam" id="PF00267">
    <property type="entry name" value="Porin_1"/>
    <property type="match status" value="1"/>
</dbReference>
<dbReference type="PRINTS" id="PR00183">
    <property type="entry name" value="ECOLIPORIN"/>
</dbReference>
<dbReference type="PRINTS" id="PR00182">
    <property type="entry name" value="ECOLNEIPORIN"/>
</dbReference>
<dbReference type="SUPFAM" id="SSF56935">
    <property type="entry name" value="Porins"/>
    <property type="match status" value="1"/>
</dbReference>
<dbReference type="PROSITE" id="PS00576">
    <property type="entry name" value="GRAM_NEG_PORIN"/>
    <property type="match status" value="1"/>
</dbReference>
<comment type="function">
    <text>Forms pores that allow passive diffusion of small molecules across the outer membrane.</text>
</comment>
<comment type="function">
    <text evidence="4">(Microbial infection) Binds CdiA-EC536, probably acts as the outer membrane receptor for toxin CdiA-EC536 with OmpF.</text>
</comment>
<comment type="subunit">
    <text evidence="1">Homotrimer. Probably forms mixed heterotrimers with OmpF; other mixed heterotrimers are also probable.</text>
</comment>
<comment type="subcellular location">
    <subcellularLocation>
        <location evidence="6">Cell outer membrane</location>
        <topology>Multi-pass membrane protein</topology>
    </subcellularLocation>
</comment>
<comment type="similarity">
    <text evidence="5">Belongs to the Gram-negative porin family.</text>
</comment>
<gene>
    <name type="primary">ompC</name>
    <name type="ordered locus">ECL_03519</name>
</gene>
<protein>
    <recommendedName>
        <fullName>Outer membrane porin C</fullName>
    </recommendedName>
    <alternativeName>
        <fullName>Outer membrane protein 1B</fullName>
    </alternativeName>
    <alternativeName>
        <fullName>Outer membrane protein C</fullName>
    </alternativeName>
    <alternativeName>
        <fullName>Porin OmpC</fullName>
    </alternativeName>
</protein>
<evidence type="ECO:0000250" key="1">
    <source>
        <dbReference type="UniProtKB" id="P06996"/>
    </source>
</evidence>
<evidence type="ECO:0000255" key="2"/>
<evidence type="ECO:0000256" key="3">
    <source>
        <dbReference type="SAM" id="MobiDB-lite"/>
    </source>
</evidence>
<evidence type="ECO:0000269" key="4">
    <source>
    </source>
</evidence>
<evidence type="ECO:0000305" key="5"/>
<evidence type="ECO:0000305" key="6">
    <source>
    </source>
</evidence>
<organism>
    <name type="scientific">Enterobacter cloacae subsp. cloacae (strain ATCC 13047 / DSM 30054 / NBRC 13535 / NCTC 10005 / WDCM 00083 / NCDC 279-56)</name>
    <dbReference type="NCBI Taxonomy" id="716541"/>
    <lineage>
        <taxon>Bacteria</taxon>
        <taxon>Pseudomonadati</taxon>
        <taxon>Pseudomonadota</taxon>
        <taxon>Gammaproteobacteria</taxon>
        <taxon>Enterobacterales</taxon>
        <taxon>Enterobacteriaceae</taxon>
        <taxon>Enterobacter</taxon>
        <taxon>Enterobacter cloacae complex</taxon>
    </lineage>
</organism>
<accession>A0A0H3CMG2</accession>
<feature type="signal peptide" evidence="2">
    <location>
        <begin position="1"/>
        <end position="21"/>
    </location>
</feature>
<feature type="chain" id="PRO_5002606566" description="Outer membrane porin C" evidence="2">
    <location>
        <begin position="22"/>
        <end position="363"/>
    </location>
</feature>
<feature type="region of interest" description="Disordered" evidence="3">
    <location>
        <begin position="174"/>
        <end position="195"/>
    </location>
</feature>
<feature type="compositionally biased region" description="Polar residues" evidence="3">
    <location>
        <begin position="174"/>
        <end position="187"/>
    </location>
</feature>
<name>OMPC_ENTCC</name>
<sequence length="363" mass="39940">MKVKVLSLLVPALLVAGAANAAEIYNKDGNKLDLYGKVDGLHYFSDDDSQDGDQTYMRLGFKGETQVNDQLTGYGQWEYQIQGNSGENENNSWTRVAFAGLKFGDAGSFDYGRNYGVVYDVTSWTDVLPEFGGDTYGSDNFMQQRGNGFATYRNSDFFGLVDGLNFAVQYQGKNGSASGEDQTNNGRTELRQNGDGVGGSITYNLGEGFGIGTAVSSSKRTSSQNDLTYGNGDRAETYTGGLKYDANNIYLAAQYTQTYNATRVGNLGWANKAQNFEVVAQYQFDFGLRPSVAYLQSKGKDLENGYGDQDLLKYVDVGATYYFNKNMSTYVDYKINLLDDKEFTRNAGISTDDIVALGLVYQF</sequence>
<keyword id="KW-0998">Cell outer membrane</keyword>
<keyword id="KW-0406">Ion transport</keyword>
<keyword id="KW-0472">Membrane</keyword>
<keyword id="KW-0626">Porin</keyword>
<keyword id="KW-1185">Reference proteome</keyword>
<keyword id="KW-0732">Signal</keyword>
<keyword id="KW-0812">Transmembrane</keyword>
<keyword id="KW-1134">Transmembrane beta strand</keyword>
<keyword id="KW-0813">Transport</keyword>